<reference key="1">
    <citation type="journal article" date="1990" name="Mol. Biol. (Mosk.)">
        <title>Molecular-biological study of vaccinia virus genome. II. Localization and nucleotide sequence of vaccinia virus genes coding for proteins 36K and 12K.</title>
        <authorList>
            <person name="Riazankina O.I."/>
            <person name="Shchelkunov S.N."/>
            <person name="Muravlev A.I."/>
            <person name="Netesova N.A."/>
            <person name="Mikriukov N.N."/>
            <person name="Gutorov V.V."/>
            <person name="Nikulin A.E."/>
            <person name="Kulichkov V.A."/>
            <person name="Malygin E.G."/>
        </authorList>
    </citation>
    <scope>NUCLEOTIDE SEQUENCE [GENOMIC DNA]</scope>
</reference>
<feature type="chain" id="PRO_0000141616" description="Glutaredoxin-1">
    <location>
        <begin position="1"/>
        <end position="108"/>
    </location>
</feature>
<feature type="domain" description="Glutaredoxin" evidence="3">
    <location>
        <begin position="3"/>
        <end position="106"/>
    </location>
</feature>
<feature type="disulfide bond" description="Redox-active" evidence="2">
    <location>
        <begin position="23"/>
        <end position="26"/>
    </location>
</feature>
<name>GLRX1_VACCP</name>
<accession>P68691</accession>
<accession>P20818</accession>
<comment type="function">
    <text>Has thioltransferase and dehydroascorbate reductase activities.</text>
</comment>
<comment type="subcellular location">
    <subcellularLocation>
        <location>Virion</location>
    </subcellularLocation>
    <text evidence="1">Localizes to the virion core.</text>
</comment>
<comment type="induction">
    <text evidence="2">Expressed in the intermediate phase of the viral replicative cycle.</text>
</comment>
<comment type="similarity">
    <text evidence="4">Belongs to the glutaredoxin family.</text>
</comment>
<evidence type="ECO:0000250" key="1"/>
<evidence type="ECO:0000250" key="2">
    <source>
        <dbReference type="UniProtKB" id="P68692"/>
    </source>
</evidence>
<evidence type="ECO:0000255" key="3">
    <source>
        <dbReference type="PROSITE-ProRule" id="PRU00686"/>
    </source>
</evidence>
<evidence type="ECO:0000305" key="4"/>
<gene>
    <name type="primary">OPG075</name>
</gene>
<keyword id="KW-1015">Disulfide bond</keyword>
<keyword id="KW-0249">Electron transport</keyword>
<keyword id="KW-0676">Redox-active center</keyword>
<keyword id="KW-0813">Transport</keyword>
<keyword id="KW-0946">Virion</keyword>
<sequence length="108" mass="12355">MAEEFVQQRLANNKVTIFVKYTCPFCRNALDILNKFSFKRGAYEIVDIKEFKPENELRDYFEQITGGRTVPRIFFGKTSIGGYSDLLEIDNMDALGDILSSIGVLRTC</sequence>
<dbReference type="EMBL" id="X61166">
    <property type="protein sequence ID" value="CAA43476.1"/>
    <property type="molecule type" value="Genomic_DNA"/>
</dbReference>
<dbReference type="PIR" id="E42510">
    <property type="entry name" value="E42510"/>
</dbReference>
<dbReference type="BMRB" id="P68691"/>
<dbReference type="SMR" id="P68691"/>
<dbReference type="DNASU" id="3707602"/>
<dbReference type="KEGG" id="vg:3707602"/>
<dbReference type="GO" id="GO:0044423">
    <property type="term" value="C:virion component"/>
    <property type="evidence" value="ECO:0007669"/>
    <property type="project" value="UniProtKB-KW"/>
</dbReference>
<dbReference type="GO" id="GO:0015038">
    <property type="term" value="F:glutathione disulfide oxidoreductase activity"/>
    <property type="evidence" value="ECO:0007669"/>
    <property type="project" value="TreeGrafter"/>
</dbReference>
<dbReference type="Gene3D" id="3.40.30.10">
    <property type="entry name" value="Glutaredoxin"/>
    <property type="match status" value="1"/>
</dbReference>
<dbReference type="InterPro" id="IPR011767">
    <property type="entry name" value="GLR_AS"/>
</dbReference>
<dbReference type="InterPro" id="IPR047185">
    <property type="entry name" value="GLRX1"/>
</dbReference>
<dbReference type="InterPro" id="IPR002109">
    <property type="entry name" value="Glutaredoxin"/>
</dbReference>
<dbReference type="InterPro" id="IPR011899">
    <property type="entry name" value="Glutaredoxin_euk/vir"/>
</dbReference>
<dbReference type="InterPro" id="IPR014025">
    <property type="entry name" value="Glutaredoxin_subgr"/>
</dbReference>
<dbReference type="InterPro" id="IPR036249">
    <property type="entry name" value="Thioredoxin-like_sf"/>
</dbReference>
<dbReference type="NCBIfam" id="TIGR02180">
    <property type="entry name" value="GRX_euk"/>
    <property type="match status" value="1"/>
</dbReference>
<dbReference type="PANTHER" id="PTHR46185">
    <property type="entry name" value="GLUTAREDOXIN-1"/>
    <property type="match status" value="1"/>
</dbReference>
<dbReference type="PANTHER" id="PTHR46185:SF1">
    <property type="entry name" value="GLUTAREDOXIN-1"/>
    <property type="match status" value="1"/>
</dbReference>
<dbReference type="Pfam" id="PF00462">
    <property type="entry name" value="Glutaredoxin"/>
    <property type="match status" value="1"/>
</dbReference>
<dbReference type="PRINTS" id="PR00160">
    <property type="entry name" value="GLUTAREDOXIN"/>
</dbReference>
<dbReference type="SUPFAM" id="SSF52833">
    <property type="entry name" value="Thioredoxin-like"/>
    <property type="match status" value="1"/>
</dbReference>
<dbReference type="PROSITE" id="PS00195">
    <property type="entry name" value="GLUTAREDOXIN_1"/>
    <property type="match status" value="1"/>
</dbReference>
<dbReference type="PROSITE" id="PS51354">
    <property type="entry name" value="GLUTAREDOXIN_2"/>
    <property type="match status" value="1"/>
</dbReference>
<organism>
    <name type="scientific">Vaccinia virus (strain L-IVP)</name>
    <name type="common">VACV</name>
    <dbReference type="NCBI Taxonomy" id="31531"/>
    <lineage>
        <taxon>Viruses</taxon>
        <taxon>Varidnaviria</taxon>
        <taxon>Bamfordvirae</taxon>
        <taxon>Nucleocytoviricota</taxon>
        <taxon>Pokkesviricetes</taxon>
        <taxon>Chitovirales</taxon>
        <taxon>Poxviridae</taxon>
        <taxon>Chordopoxvirinae</taxon>
        <taxon>Orthopoxvirus</taxon>
        <taxon>Vaccinia virus</taxon>
    </lineage>
</organism>
<proteinExistence type="inferred from homology"/>
<organismHost>
    <name type="scientific">Homo sapiens</name>
    <name type="common">Human</name>
    <dbReference type="NCBI Taxonomy" id="9606"/>
</organismHost>
<protein>
    <recommendedName>
        <fullName>Glutaredoxin-1</fullName>
    </recommendedName>
</protein>